<proteinExistence type="inferred from homology"/>
<dbReference type="EMBL" id="AB073598">
    <property type="protein sequence ID" value="BAB91134.1"/>
    <property type="molecule type" value="Genomic_DNA"/>
</dbReference>
<dbReference type="EMBL" id="AJ720522">
    <property type="protein sequence ID" value="CAG32181.1"/>
    <property type="molecule type" value="mRNA"/>
</dbReference>
<dbReference type="RefSeq" id="NP_001006464.1">
    <property type="nucleotide sequence ID" value="NM_001006464.3"/>
</dbReference>
<dbReference type="SMR" id="Q76LT9"/>
<dbReference type="FunCoup" id="Q76LT9">
    <property type="interactions" value="506"/>
</dbReference>
<dbReference type="STRING" id="9031.ENSGALP00000060565"/>
<dbReference type="PaxDb" id="9031-ENSGALP00000005743"/>
<dbReference type="GeneID" id="422964"/>
<dbReference type="KEGG" id="gga:422964"/>
<dbReference type="CTD" id="746"/>
<dbReference type="VEuPathDB" id="HostDB:geneid_422964"/>
<dbReference type="eggNOG" id="KOG4452">
    <property type="taxonomic scope" value="Eukaryota"/>
</dbReference>
<dbReference type="HOGENOM" id="CLU_180449_0_0_1"/>
<dbReference type="InParanoid" id="Q76LT9"/>
<dbReference type="OMA" id="MERYVGP"/>
<dbReference type="OrthoDB" id="18408at2759"/>
<dbReference type="PhylomeDB" id="Q76LT9"/>
<dbReference type="TreeFam" id="TF300295"/>
<dbReference type="UniPathway" id="UPA00378"/>
<dbReference type="PRO" id="PR:Q76LT9"/>
<dbReference type="Proteomes" id="UP000000539">
    <property type="component" value="Chromosome 5"/>
</dbReference>
<dbReference type="Bgee" id="ENSGALG00000038292">
    <property type="expression patterns" value="Expressed in heart and 13 other cell types or tissues"/>
</dbReference>
<dbReference type="GO" id="GO:0005737">
    <property type="term" value="C:cytoplasm"/>
    <property type="evidence" value="ECO:0000250"/>
    <property type="project" value="UniProtKB"/>
</dbReference>
<dbReference type="GO" id="GO:0005789">
    <property type="term" value="C:endoplasmic reticulum membrane"/>
    <property type="evidence" value="ECO:0000318"/>
    <property type="project" value="GO_Central"/>
</dbReference>
<dbReference type="GO" id="GO:0016020">
    <property type="term" value="C:membrane"/>
    <property type="evidence" value="ECO:0000250"/>
    <property type="project" value="UniProtKB"/>
</dbReference>
<dbReference type="GO" id="GO:0008250">
    <property type="term" value="C:oligosaccharyltransferase complex"/>
    <property type="evidence" value="ECO:0007669"/>
    <property type="project" value="InterPro"/>
</dbReference>
<dbReference type="GO" id="GO:0062062">
    <property type="term" value="F:oligosaccharyltransferase complex binding"/>
    <property type="evidence" value="ECO:0000318"/>
    <property type="project" value="GO_Central"/>
</dbReference>
<dbReference type="GO" id="GO:0006486">
    <property type="term" value="P:protein glycosylation"/>
    <property type="evidence" value="ECO:0007669"/>
    <property type="project" value="UniProtKB-UniPathway"/>
</dbReference>
<dbReference type="GO" id="GO:0034976">
    <property type="term" value="P:response to endoplasmic reticulum stress"/>
    <property type="evidence" value="ECO:0000318"/>
    <property type="project" value="GO_Central"/>
</dbReference>
<dbReference type="InterPro" id="IPR007915">
    <property type="entry name" value="TMEM258/Ost5"/>
</dbReference>
<dbReference type="PANTHER" id="PTHR13636">
    <property type="entry name" value="TRANSMEMBRANE PROTEIN 258"/>
    <property type="match status" value="1"/>
</dbReference>
<dbReference type="Pfam" id="PF05251">
    <property type="entry name" value="Ost5"/>
    <property type="match status" value="1"/>
</dbReference>
<accession>Q76LT9</accession>
<comment type="function">
    <text evidence="1">Subunit of the oligosaccharyl transferase (OST) complex that catalyzes the initial transfer of a defined glycan (Glc(3)Man(9)GlcNAc(2) in eukaryotes) from the lipid carrier dolichol-pyrophosphate to an asparagine residue within an Asn-X-Ser/Thr consensus motif in nascent polypeptide chains, the first step in protein N-glycosylation. N-glycosylation occurs cotranslationally and the complex associates with the Sec61 complex at the channel-forming translocon complex that mediates protein translocation across the endoplasmic reticulum (ER). All subunits are required for a maximal enzyme activity.</text>
</comment>
<comment type="pathway">
    <text evidence="1">Protein modification; protein glycosylation.</text>
</comment>
<comment type="subunit">
    <text evidence="1">Component of the oligosaccharyltransferase (OST) complex.</text>
</comment>
<comment type="subcellular location">
    <subcellularLocation>
        <location evidence="1">Membrane</location>
        <topology evidence="1">Multi-pass membrane protein</topology>
    </subcellularLocation>
    <subcellularLocation>
        <location evidence="1">Endoplasmic reticulum</location>
    </subcellularLocation>
    <subcellularLocation>
        <location evidence="1">Cytoplasm</location>
    </subcellularLocation>
</comment>
<comment type="similarity">
    <text evidence="3">Belongs to the OST5 family.</text>
</comment>
<keyword id="KW-0963">Cytoplasm</keyword>
<keyword id="KW-0256">Endoplasmic reticulum</keyword>
<keyword id="KW-0472">Membrane</keyword>
<keyword id="KW-1185">Reference proteome</keyword>
<keyword id="KW-0812">Transmembrane</keyword>
<keyword id="KW-1133">Transmembrane helix</keyword>
<gene>
    <name evidence="1" type="primary">TMEM258</name>
    <name type="synonym">NEF1</name>
    <name type="ORF">RCJMB04_19i7</name>
</gene>
<evidence type="ECO:0000250" key="1">
    <source>
        <dbReference type="UniProtKB" id="P61165"/>
    </source>
</evidence>
<evidence type="ECO:0000255" key="2"/>
<evidence type="ECO:0000305" key="3"/>
<feature type="chain" id="PRO_0000235837" description="Dolichyl-diphosphooligosaccharide--protein glycosyltransferase subunit TMEM258">
    <location>
        <begin position="1"/>
        <end position="79"/>
    </location>
</feature>
<feature type="transmembrane region" description="Helical" evidence="2">
    <location>
        <begin position="17"/>
        <end position="37"/>
    </location>
</feature>
<feature type="transmembrane region" description="Helical" evidence="2">
    <location>
        <begin position="55"/>
        <end position="75"/>
    </location>
</feature>
<sequence length="79" mass="9079">MELEAMSRYTSPVNPAVFPHLTVVLLAIGMFFTAWFFVYEVTSTKYTRDIYKELLISLVASLFMGFGVLFLLLWVGIYV</sequence>
<name>TM258_CHICK</name>
<protein>
    <recommendedName>
        <fullName>Dolichyl-diphosphooligosaccharide--protein glycosyltransferase subunit TMEM258</fullName>
        <shortName>Oligosaccharyl transferase subunit TMEM258</shortName>
    </recommendedName>
    <alternativeName>
        <fullName>Protein NEF1</fullName>
    </alternativeName>
    <alternativeName>
        <fullName evidence="1">Transmembrane protein 258</fullName>
    </alternativeName>
</protein>
<reference key="1">
    <citation type="submission" date="2001-10" db="EMBL/GenBank/DDBJ databases">
        <title>NEF1, a highly conserved gene located immediately upstream (and in reverse orientation) of the FEN1 gene in several higher vertebrates.</title>
        <authorList>
            <person name="Adachi N."/>
            <person name="Karanjawala Z.E."/>
            <person name="Matsuzaki Y."/>
            <person name="Koyama H."/>
            <person name="Lieber M.R."/>
        </authorList>
    </citation>
    <scope>NUCLEOTIDE SEQUENCE [GENOMIC DNA]</scope>
</reference>
<reference key="2">
    <citation type="journal article" date="2005" name="Genome Biol.">
        <title>Full-length cDNAs from chicken bursal lymphocytes to facilitate gene function analysis.</title>
        <authorList>
            <person name="Caldwell R.B."/>
            <person name="Kierzek A.M."/>
            <person name="Arakawa H."/>
            <person name="Bezzubov Y."/>
            <person name="Zaim J."/>
            <person name="Fiedler P."/>
            <person name="Kutter S."/>
            <person name="Blagodatski A."/>
            <person name="Kostovska D."/>
            <person name="Koter M."/>
            <person name="Plachy J."/>
            <person name="Carninci P."/>
            <person name="Hayashizaki Y."/>
            <person name="Buerstedde J.-M."/>
        </authorList>
    </citation>
    <scope>NUCLEOTIDE SEQUENCE [LARGE SCALE MRNA]</scope>
    <source>
        <strain>CB</strain>
        <tissue>Bursa of Fabricius</tissue>
    </source>
</reference>
<organism>
    <name type="scientific">Gallus gallus</name>
    <name type="common">Chicken</name>
    <dbReference type="NCBI Taxonomy" id="9031"/>
    <lineage>
        <taxon>Eukaryota</taxon>
        <taxon>Metazoa</taxon>
        <taxon>Chordata</taxon>
        <taxon>Craniata</taxon>
        <taxon>Vertebrata</taxon>
        <taxon>Euteleostomi</taxon>
        <taxon>Archelosauria</taxon>
        <taxon>Archosauria</taxon>
        <taxon>Dinosauria</taxon>
        <taxon>Saurischia</taxon>
        <taxon>Theropoda</taxon>
        <taxon>Coelurosauria</taxon>
        <taxon>Aves</taxon>
        <taxon>Neognathae</taxon>
        <taxon>Galloanserae</taxon>
        <taxon>Galliformes</taxon>
        <taxon>Phasianidae</taxon>
        <taxon>Phasianinae</taxon>
        <taxon>Gallus</taxon>
    </lineage>
</organism>